<organism>
    <name type="scientific">Xylella fastidiosa (strain M23)</name>
    <dbReference type="NCBI Taxonomy" id="405441"/>
    <lineage>
        <taxon>Bacteria</taxon>
        <taxon>Pseudomonadati</taxon>
        <taxon>Pseudomonadota</taxon>
        <taxon>Gammaproteobacteria</taxon>
        <taxon>Lysobacterales</taxon>
        <taxon>Lysobacteraceae</taxon>
        <taxon>Xylella</taxon>
    </lineage>
</organism>
<feature type="chain" id="PRO_1000142742" description="Large ribosomal subunit protein uL18">
    <location>
        <begin position="1"/>
        <end position="119"/>
    </location>
</feature>
<reference key="1">
    <citation type="journal article" date="2010" name="J. Bacteriol.">
        <title>Whole genome sequences of two Xylella fastidiosa strains (M12 and M23) causing almond leaf scorch disease in California.</title>
        <authorList>
            <person name="Chen J."/>
            <person name="Xie G."/>
            <person name="Han S."/>
            <person name="Chertkov O."/>
            <person name="Sims D."/>
            <person name="Civerolo E.L."/>
        </authorList>
    </citation>
    <scope>NUCLEOTIDE SEQUENCE [LARGE SCALE GENOMIC DNA]</scope>
    <source>
        <strain>M23</strain>
    </source>
</reference>
<proteinExistence type="inferred from homology"/>
<accession>B2I8I5</accession>
<protein>
    <recommendedName>
        <fullName evidence="1">Large ribosomal subunit protein uL18</fullName>
    </recommendedName>
    <alternativeName>
        <fullName evidence="2">50S ribosomal protein L18</fullName>
    </alternativeName>
</protein>
<keyword id="KW-0687">Ribonucleoprotein</keyword>
<keyword id="KW-0689">Ribosomal protein</keyword>
<keyword id="KW-0694">RNA-binding</keyword>
<keyword id="KW-0699">rRNA-binding</keyword>
<dbReference type="EMBL" id="CP001011">
    <property type="protein sequence ID" value="ACB91896.1"/>
    <property type="molecule type" value="Genomic_DNA"/>
</dbReference>
<dbReference type="RefSeq" id="WP_004090124.1">
    <property type="nucleotide sequence ID" value="NC_010577.1"/>
</dbReference>
<dbReference type="SMR" id="B2I8I5"/>
<dbReference type="GeneID" id="93904155"/>
<dbReference type="KEGG" id="xfn:XfasM23_0449"/>
<dbReference type="HOGENOM" id="CLU_098841_0_1_6"/>
<dbReference type="Proteomes" id="UP000001698">
    <property type="component" value="Chromosome"/>
</dbReference>
<dbReference type="GO" id="GO:0022625">
    <property type="term" value="C:cytosolic large ribosomal subunit"/>
    <property type="evidence" value="ECO:0007669"/>
    <property type="project" value="TreeGrafter"/>
</dbReference>
<dbReference type="GO" id="GO:0008097">
    <property type="term" value="F:5S rRNA binding"/>
    <property type="evidence" value="ECO:0007669"/>
    <property type="project" value="TreeGrafter"/>
</dbReference>
<dbReference type="GO" id="GO:0003735">
    <property type="term" value="F:structural constituent of ribosome"/>
    <property type="evidence" value="ECO:0007669"/>
    <property type="project" value="InterPro"/>
</dbReference>
<dbReference type="GO" id="GO:0006412">
    <property type="term" value="P:translation"/>
    <property type="evidence" value="ECO:0007669"/>
    <property type="project" value="UniProtKB-UniRule"/>
</dbReference>
<dbReference type="CDD" id="cd00432">
    <property type="entry name" value="Ribosomal_L18_L5e"/>
    <property type="match status" value="1"/>
</dbReference>
<dbReference type="FunFam" id="3.30.420.100:FF:000001">
    <property type="entry name" value="50S ribosomal protein L18"/>
    <property type="match status" value="1"/>
</dbReference>
<dbReference type="Gene3D" id="3.30.420.100">
    <property type="match status" value="1"/>
</dbReference>
<dbReference type="HAMAP" id="MF_01337_B">
    <property type="entry name" value="Ribosomal_uL18_B"/>
    <property type="match status" value="1"/>
</dbReference>
<dbReference type="InterPro" id="IPR004389">
    <property type="entry name" value="Ribosomal_uL18_bac-type"/>
</dbReference>
<dbReference type="InterPro" id="IPR005484">
    <property type="entry name" value="Ribosomal_uL18_bac/euk"/>
</dbReference>
<dbReference type="NCBIfam" id="TIGR00060">
    <property type="entry name" value="L18_bact"/>
    <property type="match status" value="1"/>
</dbReference>
<dbReference type="PANTHER" id="PTHR12899">
    <property type="entry name" value="39S RIBOSOMAL PROTEIN L18, MITOCHONDRIAL"/>
    <property type="match status" value="1"/>
</dbReference>
<dbReference type="PANTHER" id="PTHR12899:SF3">
    <property type="entry name" value="LARGE RIBOSOMAL SUBUNIT PROTEIN UL18M"/>
    <property type="match status" value="1"/>
</dbReference>
<dbReference type="Pfam" id="PF00861">
    <property type="entry name" value="Ribosomal_L18p"/>
    <property type="match status" value="1"/>
</dbReference>
<dbReference type="SUPFAM" id="SSF53137">
    <property type="entry name" value="Translational machinery components"/>
    <property type="match status" value="1"/>
</dbReference>
<gene>
    <name evidence="1" type="primary">rplR</name>
    <name type="ordered locus">XfasM23_0449</name>
</gene>
<evidence type="ECO:0000255" key="1">
    <source>
        <dbReference type="HAMAP-Rule" id="MF_01337"/>
    </source>
</evidence>
<evidence type="ECO:0000305" key="2"/>
<comment type="function">
    <text evidence="1">This is one of the proteins that bind and probably mediate the attachment of the 5S RNA into the large ribosomal subunit, where it forms part of the central protuberance.</text>
</comment>
<comment type="subunit">
    <text evidence="1">Part of the 50S ribosomal subunit; part of the 5S rRNA/L5/L18/L25 subcomplex. Contacts the 5S and 23S rRNAs.</text>
</comment>
<comment type="similarity">
    <text evidence="1">Belongs to the universal ribosomal protein uL18 family.</text>
</comment>
<name>RL18_XYLF2</name>
<sequence>MSIGKNVARLRRAKSTRLHIRKLGVPRLSVLRTGRHLYAQIFTADGSKVIAAANTLQSQVKGGLKNGKNSLAAIKVGKLIAERARAVGVDRIAFDRSGYLYHGRIKILADAARDAGLKF</sequence>